<accession>P52248</accession>
<dbReference type="PIR" id="D61587">
    <property type="entry name" value="D61587"/>
</dbReference>
<dbReference type="SMR" id="P52248"/>
<dbReference type="Proteomes" id="UP000694420">
    <property type="component" value="Unplaced"/>
</dbReference>
<dbReference type="GO" id="GO:0005576">
    <property type="term" value="C:extracellular region"/>
    <property type="evidence" value="ECO:0007669"/>
    <property type="project" value="UniProtKB-SubCell"/>
</dbReference>
<dbReference type="GO" id="GO:0004867">
    <property type="term" value="F:serine-type endopeptidase inhibitor activity"/>
    <property type="evidence" value="ECO:0007669"/>
    <property type="project" value="UniProtKB-KW"/>
</dbReference>
<dbReference type="CDD" id="cd00104">
    <property type="entry name" value="KAZAL_FS"/>
    <property type="match status" value="1"/>
</dbReference>
<dbReference type="FunFam" id="3.30.60.30:FF:000037">
    <property type="entry name" value="Ovomucoid"/>
    <property type="match status" value="1"/>
</dbReference>
<dbReference type="Gene3D" id="3.30.60.30">
    <property type="match status" value="1"/>
</dbReference>
<dbReference type="InterPro" id="IPR051597">
    <property type="entry name" value="Bifunctional_prot_inhibitor"/>
</dbReference>
<dbReference type="InterPro" id="IPR002350">
    <property type="entry name" value="Kazal_dom"/>
</dbReference>
<dbReference type="InterPro" id="IPR036058">
    <property type="entry name" value="Kazal_dom_sf"/>
</dbReference>
<dbReference type="InterPro" id="IPR001239">
    <property type="entry name" value="Prot_inh_Kazal-m"/>
</dbReference>
<dbReference type="PANTHER" id="PTHR47729:SF1">
    <property type="entry name" value="OVOMUCOID-LIKE-RELATED"/>
    <property type="match status" value="1"/>
</dbReference>
<dbReference type="PANTHER" id="PTHR47729">
    <property type="entry name" value="SERINE PEPTIDASE INHIBITOR, KAZAL TYPE 2, TANDEM DUPLICATE 1-RELATED"/>
    <property type="match status" value="1"/>
</dbReference>
<dbReference type="Pfam" id="PF00050">
    <property type="entry name" value="Kazal_1"/>
    <property type="match status" value="1"/>
</dbReference>
<dbReference type="PRINTS" id="PR00290">
    <property type="entry name" value="KAZALINHBTR"/>
</dbReference>
<dbReference type="SMART" id="SM00280">
    <property type="entry name" value="KAZAL"/>
    <property type="match status" value="1"/>
</dbReference>
<dbReference type="SUPFAM" id="SSF100895">
    <property type="entry name" value="Kazal-type serine protease inhibitors"/>
    <property type="match status" value="1"/>
</dbReference>
<dbReference type="PROSITE" id="PS00282">
    <property type="entry name" value="KAZAL_1"/>
    <property type="match status" value="1"/>
</dbReference>
<dbReference type="PROSITE" id="PS51465">
    <property type="entry name" value="KAZAL_2"/>
    <property type="match status" value="1"/>
</dbReference>
<comment type="subcellular location">
    <subcellularLocation>
        <location>Secreted</location>
    </subcellularLocation>
</comment>
<comment type="domain">
    <text>Avian ovomucoid consists of three homologous, tandem Kazal family inhibitory domains.</text>
</comment>
<sequence>VTVDCSGYPKPACTLEYFPLCGSDNQTYANKCTFCNAVVEKNVTLNHLGEC</sequence>
<keyword id="KW-0903">Direct protein sequencing</keyword>
<keyword id="KW-1015">Disulfide bond</keyword>
<keyword id="KW-0325">Glycoprotein</keyword>
<keyword id="KW-0646">Protease inhibitor</keyword>
<keyword id="KW-1185">Reference proteome</keyword>
<keyword id="KW-0677">Repeat</keyword>
<keyword id="KW-0964">Secreted</keyword>
<keyword id="KW-0722">Serine protease inhibitor</keyword>
<proteinExistence type="evidence at protein level"/>
<name>IOVO_NOTPE</name>
<protein>
    <recommendedName>
        <fullName>Ovomucoid</fullName>
    </recommendedName>
</protein>
<evidence type="ECO:0000255" key="1">
    <source>
        <dbReference type="PROSITE-ProRule" id="PRU00798"/>
    </source>
</evidence>
<organism>
    <name type="scientific">Nothoprocta perdicaria</name>
    <name type="common">Chilean tinamou</name>
    <name type="synonym">Crypturus perdicarius</name>
    <dbReference type="NCBI Taxonomy" id="30464"/>
    <lineage>
        <taxon>Eukaryota</taxon>
        <taxon>Metazoa</taxon>
        <taxon>Chordata</taxon>
        <taxon>Craniata</taxon>
        <taxon>Vertebrata</taxon>
        <taxon>Euteleostomi</taxon>
        <taxon>Archelosauria</taxon>
        <taxon>Archosauria</taxon>
        <taxon>Dinosauria</taxon>
        <taxon>Saurischia</taxon>
        <taxon>Theropoda</taxon>
        <taxon>Coelurosauria</taxon>
        <taxon>Aves</taxon>
        <taxon>Palaeognathae</taxon>
        <taxon>Tinamiformes</taxon>
        <taxon>Tinamidae</taxon>
        <taxon>Nothoprocta</taxon>
    </lineage>
</organism>
<feature type="chain" id="PRO_0000073148" description="Ovomucoid">
    <location>
        <begin position="1" status="less than"/>
        <end position="51" status="greater than"/>
    </location>
</feature>
<feature type="domain" description="Kazal-like" evidence="1">
    <location>
        <begin position="3"/>
        <end position="51"/>
    </location>
</feature>
<feature type="site" description="Reactive bond 3">
    <location>
        <begin position="15"/>
        <end position="16"/>
    </location>
</feature>
<feature type="glycosylation site" description="N-linked (GlcNAc...) asparagine">
    <location>
        <position position="42"/>
    </location>
</feature>
<feature type="disulfide bond">
    <location>
        <begin position="5"/>
        <end position="35"/>
    </location>
</feature>
<feature type="disulfide bond">
    <location>
        <begin position="13"/>
        <end position="32"/>
    </location>
</feature>
<feature type="disulfide bond">
    <location>
        <begin position="21"/>
        <end position="51"/>
    </location>
</feature>
<feature type="sequence variant">
    <original>A</original>
    <variation>P</variation>
    <location>
        <position position="29"/>
    </location>
</feature>
<feature type="non-terminal residue">
    <location>
        <position position="1"/>
    </location>
</feature>
<feature type="non-terminal residue">
    <location>
        <position position="51"/>
    </location>
</feature>
<reference key="1">
    <citation type="journal article" date="1993" name="J. Protein Chem.">
        <title>Amino acid sequences of ovomucoid third domains from 27 additional species of birds.</title>
        <authorList>
            <person name="Apostol I."/>
            <person name="Giletto A."/>
            <person name="Komiyama T."/>
            <person name="Zhang W."/>
            <person name="Laskowski M. Jr."/>
        </authorList>
    </citation>
    <scope>PROTEIN SEQUENCE</scope>
</reference>